<organism>
    <name type="scientific">Streptococcus pneumoniae (strain 70585)</name>
    <dbReference type="NCBI Taxonomy" id="488221"/>
    <lineage>
        <taxon>Bacteria</taxon>
        <taxon>Bacillati</taxon>
        <taxon>Bacillota</taxon>
        <taxon>Bacilli</taxon>
        <taxon>Lactobacillales</taxon>
        <taxon>Streptococcaceae</taxon>
        <taxon>Streptococcus</taxon>
    </lineage>
</organism>
<accession>C1C966</accession>
<dbReference type="EC" id="4.2.1.20" evidence="1"/>
<dbReference type="EMBL" id="CP000918">
    <property type="protein sequence ID" value="ACO17425.1"/>
    <property type="molecule type" value="Genomic_DNA"/>
</dbReference>
<dbReference type="RefSeq" id="WP_000331293.1">
    <property type="nucleotide sequence ID" value="NC_012468.1"/>
</dbReference>
<dbReference type="SMR" id="C1C966"/>
<dbReference type="KEGG" id="snm:SP70585_1873"/>
<dbReference type="HOGENOM" id="CLU_016734_3_1_9"/>
<dbReference type="UniPathway" id="UPA00035">
    <property type="reaction ID" value="UER00044"/>
</dbReference>
<dbReference type="Proteomes" id="UP000002211">
    <property type="component" value="Chromosome"/>
</dbReference>
<dbReference type="GO" id="GO:0005737">
    <property type="term" value="C:cytoplasm"/>
    <property type="evidence" value="ECO:0007669"/>
    <property type="project" value="TreeGrafter"/>
</dbReference>
<dbReference type="GO" id="GO:0004834">
    <property type="term" value="F:tryptophan synthase activity"/>
    <property type="evidence" value="ECO:0007669"/>
    <property type="project" value="UniProtKB-UniRule"/>
</dbReference>
<dbReference type="CDD" id="cd06446">
    <property type="entry name" value="Trp-synth_B"/>
    <property type="match status" value="1"/>
</dbReference>
<dbReference type="FunFam" id="3.40.50.1100:FF:000001">
    <property type="entry name" value="Tryptophan synthase beta chain"/>
    <property type="match status" value="1"/>
</dbReference>
<dbReference type="FunFam" id="3.40.50.1100:FF:000004">
    <property type="entry name" value="Tryptophan synthase beta chain"/>
    <property type="match status" value="1"/>
</dbReference>
<dbReference type="Gene3D" id="3.40.50.1100">
    <property type="match status" value="2"/>
</dbReference>
<dbReference type="HAMAP" id="MF_00133">
    <property type="entry name" value="Trp_synth_beta"/>
    <property type="match status" value="1"/>
</dbReference>
<dbReference type="InterPro" id="IPR006653">
    <property type="entry name" value="Trp_synth_b_CS"/>
</dbReference>
<dbReference type="InterPro" id="IPR006654">
    <property type="entry name" value="Trp_synth_beta"/>
</dbReference>
<dbReference type="InterPro" id="IPR023026">
    <property type="entry name" value="Trp_synth_beta/beta-like"/>
</dbReference>
<dbReference type="InterPro" id="IPR001926">
    <property type="entry name" value="TrpB-like_PALP"/>
</dbReference>
<dbReference type="InterPro" id="IPR036052">
    <property type="entry name" value="TrpB-like_PALP_sf"/>
</dbReference>
<dbReference type="NCBIfam" id="TIGR00263">
    <property type="entry name" value="trpB"/>
    <property type="match status" value="1"/>
</dbReference>
<dbReference type="PANTHER" id="PTHR48077:SF3">
    <property type="entry name" value="TRYPTOPHAN SYNTHASE"/>
    <property type="match status" value="1"/>
</dbReference>
<dbReference type="PANTHER" id="PTHR48077">
    <property type="entry name" value="TRYPTOPHAN SYNTHASE-RELATED"/>
    <property type="match status" value="1"/>
</dbReference>
<dbReference type="Pfam" id="PF00291">
    <property type="entry name" value="PALP"/>
    <property type="match status" value="1"/>
</dbReference>
<dbReference type="PIRSF" id="PIRSF001413">
    <property type="entry name" value="Trp_syn_beta"/>
    <property type="match status" value="1"/>
</dbReference>
<dbReference type="SUPFAM" id="SSF53686">
    <property type="entry name" value="Tryptophan synthase beta subunit-like PLP-dependent enzymes"/>
    <property type="match status" value="1"/>
</dbReference>
<dbReference type="PROSITE" id="PS00168">
    <property type="entry name" value="TRP_SYNTHASE_BETA"/>
    <property type="match status" value="1"/>
</dbReference>
<name>TRPB_STRP7</name>
<sequence>MAYQEPNKDGFYGKFGGRFVPETLMTAVLELEKAYRESQADPSFQEELNQLLRQYVGRETPLYYAKNLTQHIGGAKIYLKREDLNHTGAHKINNALGQVWLAKRMGKKKIIAETGAGQHGVATATAAALFNMECTIYMGEEDVKRQALNVFRMELLGAKVEAVTDGSRVLKDAVNAALRSWVANIDDTHYILGSALGPHPFPEIVRDFQSVIGREAKQQYRDLTGRDLPDALVACVGGGSNAIGLFHPFVEDESVAMYGTEAAGLGVDTEHHAATLTKGRPGVLHGSLMDVLQDAHGQILEAFSISAGLDYPGIGPEHSHYHDIKRASYVPVTDEEALEGFQLLSRVEGIIPALESSHAIAFAVKLAKELGPEKSMIVCLSGRGDKDVVQVKDRLEADAAKKGEAHA</sequence>
<gene>
    <name evidence="1" type="primary">trpB</name>
    <name type="ordered locus">SP70585_1873</name>
</gene>
<keyword id="KW-0028">Amino-acid biosynthesis</keyword>
<keyword id="KW-0057">Aromatic amino acid biosynthesis</keyword>
<keyword id="KW-0456">Lyase</keyword>
<keyword id="KW-0663">Pyridoxal phosphate</keyword>
<keyword id="KW-0822">Tryptophan biosynthesis</keyword>
<feature type="chain" id="PRO_1000198754" description="Tryptophan synthase beta chain">
    <location>
        <begin position="1"/>
        <end position="407"/>
    </location>
</feature>
<feature type="modified residue" description="N6-(pyridoxal phosphate)lysine" evidence="1">
    <location>
        <position position="91"/>
    </location>
</feature>
<reference key="1">
    <citation type="journal article" date="2010" name="Genome Biol.">
        <title>Structure and dynamics of the pan-genome of Streptococcus pneumoniae and closely related species.</title>
        <authorList>
            <person name="Donati C."/>
            <person name="Hiller N.L."/>
            <person name="Tettelin H."/>
            <person name="Muzzi A."/>
            <person name="Croucher N.J."/>
            <person name="Angiuoli S.V."/>
            <person name="Oggioni M."/>
            <person name="Dunning Hotopp J.C."/>
            <person name="Hu F.Z."/>
            <person name="Riley D.R."/>
            <person name="Covacci A."/>
            <person name="Mitchell T.J."/>
            <person name="Bentley S.D."/>
            <person name="Kilian M."/>
            <person name="Ehrlich G.D."/>
            <person name="Rappuoli R."/>
            <person name="Moxon E.R."/>
            <person name="Masignani V."/>
        </authorList>
    </citation>
    <scope>NUCLEOTIDE SEQUENCE [LARGE SCALE GENOMIC DNA]</scope>
    <source>
        <strain>70585</strain>
    </source>
</reference>
<proteinExistence type="inferred from homology"/>
<protein>
    <recommendedName>
        <fullName evidence="1">Tryptophan synthase beta chain</fullName>
        <ecNumber evidence="1">4.2.1.20</ecNumber>
    </recommendedName>
</protein>
<evidence type="ECO:0000255" key="1">
    <source>
        <dbReference type="HAMAP-Rule" id="MF_00133"/>
    </source>
</evidence>
<comment type="function">
    <text evidence="1">The beta subunit is responsible for the synthesis of L-tryptophan from indole and L-serine.</text>
</comment>
<comment type="catalytic activity">
    <reaction evidence="1">
        <text>(1S,2R)-1-C-(indol-3-yl)glycerol 3-phosphate + L-serine = D-glyceraldehyde 3-phosphate + L-tryptophan + H2O</text>
        <dbReference type="Rhea" id="RHEA:10532"/>
        <dbReference type="ChEBI" id="CHEBI:15377"/>
        <dbReference type="ChEBI" id="CHEBI:33384"/>
        <dbReference type="ChEBI" id="CHEBI:57912"/>
        <dbReference type="ChEBI" id="CHEBI:58866"/>
        <dbReference type="ChEBI" id="CHEBI:59776"/>
        <dbReference type="EC" id="4.2.1.20"/>
    </reaction>
</comment>
<comment type="cofactor">
    <cofactor evidence="1">
        <name>pyridoxal 5'-phosphate</name>
        <dbReference type="ChEBI" id="CHEBI:597326"/>
    </cofactor>
</comment>
<comment type="pathway">
    <text evidence="1">Amino-acid biosynthesis; L-tryptophan biosynthesis; L-tryptophan from chorismate: step 5/5.</text>
</comment>
<comment type="subunit">
    <text evidence="1">Tetramer of two alpha and two beta chains.</text>
</comment>
<comment type="similarity">
    <text evidence="1">Belongs to the TrpB family.</text>
</comment>